<name>RS11_CAMJE</name>
<sequence length="130" mass="13893">MAKRKIVKKKVVKKNIAKGIVYISATFNNTMVTVTDEMGNAIAWSSAGGLGFKGSKKSTPYAAQQAVEDALNKAKEHGIKEVGIKVQGPGSGRETAVKSVGAMEGIKVTFLKDITPLAHNGCRPPKRRRV</sequence>
<keyword id="KW-1185">Reference proteome</keyword>
<keyword id="KW-0687">Ribonucleoprotein</keyword>
<keyword id="KW-0689">Ribosomal protein</keyword>
<keyword id="KW-0694">RNA-binding</keyword>
<keyword id="KW-0699">rRNA-binding</keyword>
<feature type="chain" id="PRO_0000123125" description="Small ribosomal subunit protein uS11">
    <location>
        <begin position="1"/>
        <end position="130"/>
    </location>
</feature>
<accession>Q9PM82</accession>
<accession>Q0P835</accession>
<organism>
    <name type="scientific">Campylobacter jejuni subsp. jejuni serotype O:2 (strain ATCC 700819 / NCTC 11168)</name>
    <dbReference type="NCBI Taxonomy" id="192222"/>
    <lineage>
        <taxon>Bacteria</taxon>
        <taxon>Pseudomonadati</taxon>
        <taxon>Campylobacterota</taxon>
        <taxon>Epsilonproteobacteria</taxon>
        <taxon>Campylobacterales</taxon>
        <taxon>Campylobacteraceae</taxon>
        <taxon>Campylobacter</taxon>
    </lineage>
</organism>
<protein>
    <recommendedName>
        <fullName evidence="1">Small ribosomal subunit protein uS11</fullName>
    </recommendedName>
    <alternativeName>
        <fullName evidence="2">30S ribosomal protein S11</fullName>
    </alternativeName>
</protein>
<gene>
    <name evidence="1" type="primary">rpsK</name>
    <name type="ordered locus">Cj1593</name>
</gene>
<dbReference type="EMBL" id="AL111168">
    <property type="protein sequence ID" value="CAL35690.1"/>
    <property type="molecule type" value="Genomic_DNA"/>
</dbReference>
<dbReference type="PIR" id="G81254">
    <property type="entry name" value="G81254"/>
</dbReference>
<dbReference type="RefSeq" id="WP_002779544.1">
    <property type="nucleotide sequence ID" value="NZ_SZUC01000002.1"/>
</dbReference>
<dbReference type="RefSeq" id="YP_002344962.1">
    <property type="nucleotide sequence ID" value="NC_002163.1"/>
</dbReference>
<dbReference type="SMR" id="Q9PM82"/>
<dbReference type="IntAct" id="Q9PM82">
    <property type="interactions" value="5"/>
</dbReference>
<dbReference type="STRING" id="192222.Cj1593"/>
<dbReference type="PaxDb" id="192222-Cj1593"/>
<dbReference type="EnsemblBacteria" id="CAL35690">
    <property type="protein sequence ID" value="CAL35690"/>
    <property type="gene ID" value="Cj1593"/>
</dbReference>
<dbReference type="GeneID" id="905862"/>
<dbReference type="GeneID" id="98394728"/>
<dbReference type="KEGG" id="cje:Cj1593"/>
<dbReference type="PATRIC" id="fig|192222.6.peg.1569"/>
<dbReference type="eggNOG" id="COG0100">
    <property type="taxonomic scope" value="Bacteria"/>
</dbReference>
<dbReference type="HOGENOM" id="CLU_072439_5_0_7"/>
<dbReference type="OrthoDB" id="9806415at2"/>
<dbReference type="Proteomes" id="UP000000799">
    <property type="component" value="Chromosome"/>
</dbReference>
<dbReference type="GO" id="GO:1990904">
    <property type="term" value="C:ribonucleoprotein complex"/>
    <property type="evidence" value="ECO:0007669"/>
    <property type="project" value="UniProtKB-KW"/>
</dbReference>
<dbReference type="GO" id="GO:0005840">
    <property type="term" value="C:ribosome"/>
    <property type="evidence" value="ECO:0007669"/>
    <property type="project" value="UniProtKB-KW"/>
</dbReference>
<dbReference type="GO" id="GO:0019843">
    <property type="term" value="F:rRNA binding"/>
    <property type="evidence" value="ECO:0007669"/>
    <property type="project" value="UniProtKB-UniRule"/>
</dbReference>
<dbReference type="GO" id="GO:0003735">
    <property type="term" value="F:structural constituent of ribosome"/>
    <property type="evidence" value="ECO:0007669"/>
    <property type="project" value="InterPro"/>
</dbReference>
<dbReference type="GO" id="GO:0006412">
    <property type="term" value="P:translation"/>
    <property type="evidence" value="ECO:0007669"/>
    <property type="project" value="UniProtKB-UniRule"/>
</dbReference>
<dbReference type="FunFam" id="3.30.420.80:FF:000001">
    <property type="entry name" value="30S ribosomal protein S11"/>
    <property type="match status" value="1"/>
</dbReference>
<dbReference type="Gene3D" id="3.30.420.80">
    <property type="entry name" value="Ribosomal protein S11"/>
    <property type="match status" value="1"/>
</dbReference>
<dbReference type="HAMAP" id="MF_01310">
    <property type="entry name" value="Ribosomal_uS11"/>
    <property type="match status" value="1"/>
</dbReference>
<dbReference type="InterPro" id="IPR001971">
    <property type="entry name" value="Ribosomal_uS11"/>
</dbReference>
<dbReference type="InterPro" id="IPR019981">
    <property type="entry name" value="Ribosomal_uS11_bac-type"/>
</dbReference>
<dbReference type="InterPro" id="IPR018102">
    <property type="entry name" value="Ribosomal_uS11_CS"/>
</dbReference>
<dbReference type="InterPro" id="IPR036967">
    <property type="entry name" value="Ribosomal_uS11_sf"/>
</dbReference>
<dbReference type="NCBIfam" id="NF003698">
    <property type="entry name" value="PRK05309.1"/>
    <property type="match status" value="1"/>
</dbReference>
<dbReference type="NCBIfam" id="TIGR03632">
    <property type="entry name" value="uS11_bact"/>
    <property type="match status" value="1"/>
</dbReference>
<dbReference type="PANTHER" id="PTHR11759">
    <property type="entry name" value="40S RIBOSOMAL PROTEIN S14/30S RIBOSOMAL PROTEIN S11"/>
    <property type="match status" value="1"/>
</dbReference>
<dbReference type="Pfam" id="PF00411">
    <property type="entry name" value="Ribosomal_S11"/>
    <property type="match status" value="1"/>
</dbReference>
<dbReference type="PIRSF" id="PIRSF002131">
    <property type="entry name" value="Ribosomal_S11"/>
    <property type="match status" value="1"/>
</dbReference>
<dbReference type="SUPFAM" id="SSF53137">
    <property type="entry name" value="Translational machinery components"/>
    <property type="match status" value="1"/>
</dbReference>
<dbReference type="PROSITE" id="PS00054">
    <property type="entry name" value="RIBOSOMAL_S11"/>
    <property type="match status" value="1"/>
</dbReference>
<proteinExistence type="inferred from homology"/>
<comment type="function">
    <text evidence="1">Located on the platform of the 30S subunit, it bridges several disparate RNA helices of the 16S rRNA. Forms part of the Shine-Dalgarno cleft in the 70S ribosome.</text>
</comment>
<comment type="subunit">
    <text evidence="1">Part of the 30S ribosomal subunit. Interacts with proteins S7 and S18. Binds to IF-3.</text>
</comment>
<comment type="similarity">
    <text evidence="1">Belongs to the universal ribosomal protein uS11 family.</text>
</comment>
<evidence type="ECO:0000255" key="1">
    <source>
        <dbReference type="HAMAP-Rule" id="MF_01310"/>
    </source>
</evidence>
<evidence type="ECO:0000305" key="2"/>
<reference key="1">
    <citation type="journal article" date="2000" name="Nature">
        <title>The genome sequence of the food-borne pathogen Campylobacter jejuni reveals hypervariable sequences.</title>
        <authorList>
            <person name="Parkhill J."/>
            <person name="Wren B.W."/>
            <person name="Mungall K.L."/>
            <person name="Ketley J.M."/>
            <person name="Churcher C.M."/>
            <person name="Basham D."/>
            <person name="Chillingworth T."/>
            <person name="Davies R.M."/>
            <person name="Feltwell T."/>
            <person name="Holroyd S."/>
            <person name="Jagels K."/>
            <person name="Karlyshev A.V."/>
            <person name="Moule S."/>
            <person name="Pallen M.J."/>
            <person name="Penn C.W."/>
            <person name="Quail M.A."/>
            <person name="Rajandream M.A."/>
            <person name="Rutherford K.M."/>
            <person name="van Vliet A.H.M."/>
            <person name="Whitehead S."/>
            <person name="Barrell B.G."/>
        </authorList>
    </citation>
    <scope>NUCLEOTIDE SEQUENCE [LARGE SCALE GENOMIC DNA]</scope>
    <source>
        <strain>ATCC 700819 / NCTC 11168</strain>
    </source>
</reference>